<proteinExistence type="inferred from homology"/>
<gene>
    <name evidence="1" type="primary">htpX</name>
    <name type="ordered locus">PSEEN1582</name>
</gene>
<comment type="cofactor">
    <cofactor evidence="1">
        <name>Zn(2+)</name>
        <dbReference type="ChEBI" id="CHEBI:29105"/>
    </cofactor>
    <text evidence="1">Binds 1 zinc ion per subunit.</text>
</comment>
<comment type="subcellular location">
    <subcellularLocation>
        <location evidence="1">Cell inner membrane</location>
        <topology evidence="1">Multi-pass membrane protein</topology>
    </subcellularLocation>
</comment>
<comment type="similarity">
    <text evidence="1">Belongs to the peptidase M48B family.</text>
</comment>
<keyword id="KW-0997">Cell inner membrane</keyword>
<keyword id="KW-1003">Cell membrane</keyword>
<keyword id="KW-0378">Hydrolase</keyword>
<keyword id="KW-0472">Membrane</keyword>
<keyword id="KW-0479">Metal-binding</keyword>
<keyword id="KW-0482">Metalloprotease</keyword>
<keyword id="KW-0645">Protease</keyword>
<keyword id="KW-0346">Stress response</keyword>
<keyword id="KW-0812">Transmembrane</keyword>
<keyword id="KW-1133">Transmembrane helix</keyword>
<keyword id="KW-0862">Zinc</keyword>
<dbReference type="EC" id="3.4.24.-" evidence="1"/>
<dbReference type="EMBL" id="CT573326">
    <property type="protein sequence ID" value="CAK14443.1"/>
    <property type="molecule type" value="Genomic_DNA"/>
</dbReference>
<dbReference type="RefSeq" id="WP_011532856.1">
    <property type="nucleotide sequence ID" value="NC_008027.1"/>
</dbReference>
<dbReference type="SMR" id="Q1ID18"/>
<dbReference type="STRING" id="384676.PSEEN1582"/>
<dbReference type="MEROPS" id="M48.002"/>
<dbReference type="GeneID" id="32804824"/>
<dbReference type="KEGG" id="pen:PSEEN1582"/>
<dbReference type="eggNOG" id="COG0501">
    <property type="taxonomic scope" value="Bacteria"/>
</dbReference>
<dbReference type="HOGENOM" id="CLU_042266_1_0_6"/>
<dbReference type="OrthoDB" id="15218at2"/>
<dbReference type="Proteomes" id="UP000000658">
    <property type="component" value="Chromosome"/>
</dbReference>
<dbReference type="GO" id="GO:0005886">
    <property type="term" value="C:plasma membrane"/>
    <property type="evidence" value="ECO:0007669"/>
    <property type="project" value="UniProtKB-SubCell"/>
</dbReference>
<dbReference type="GO" id="GO:0004222">
    <property type="term" value="F:metalloendopeptidase activity"/>
    <property type="evidence" value="ECO:0007669"/>
    <property type="project" value="UniProtKB-UniRule"/>
</dbReference>
<dbReference type="GO" id="GO:0008270">
    <property type="term" value="F:zinc ion binding"/>
    <property type="evidence" value="ECO:0007669"/>
    <property type="project" value="UniProtKB-UniRule"/>
</dbReference>
<dbReference type="GO" id="GO:0006508">
    <property type="term" value="P:proteolysis"/>
    <property type="evidence" value="ECO:0007669"/>
    <property type="project" value="UniProtKB-KW"/>
</dbReference>
<dbReference type="CDD" id="cd07335">
    <property type="entry name" value="M48B_HtpX_like"/>
    <property type="match status" value="1"/>
</dbReference>
<dbReference type="Gene3D" id="3.30.2010.10">
    <property type="entry name" value="Metalloproteases ('zincins'), catalytic domain"/>
    <property type="match status" value="1"/>
</dbReference>
<dbReference type="HAMAP" id="MF_00188">
    <property type="entry name" value="Pept_M48_protease_HtpX"/>
    <property type="match status" value="1"/>
</dbReference>
<dbReference type="InterPro" id="IPR050083">
    <property type="entry name" value="HtpX_protease"/>
</dbReference>
<dbReference type="InterPro" id="IPR022919">
    <property type="entry name" value="Pept_M48_protease_HtpX"/>
</dbReference>
<dbReference type="InterPro" id="IPR001915">
    <property type="entry name" value="Peptidase_M48"/>
</dbReference>
<dbReference type="NCBIfam" id="NF003965">
    <property type="entry name" value="PRK05457.1"/>
    <property type="match status" value="1"/>
</dbReference>
<dbReference type="PANTHER" id="PTHR43221">
    <property type="entry name" value="PROTEASE HTPX"/>
    <property type="match status" value="1"/>
</dbReference>
<dbReference type="PANTHER" id="PTHR43221:SF1">
    <property type="entry name" value="PROTEASE HTPX"/>
    <property type="match status" value="1"/>
</dbReference>
<dbReference type="Pfam" id="PF01435">
    <property type="entry name" value="Peptidase_M48"/>
    <property type="match status" value="1"/>
</dbReference>
<reference key="1">
    <citation type="journal article" date="2006" name="Nat. Biotechnol.">
        <title>Complete genome sequence of the entomopathogenic and metabolically versatile soil bacterium Pseudomonas entomophila.</title>
        <authorList>
            <person name="Vodovar N."/>
            <person name="Vallenet D."/>
            <person name="Cruveiller S."/>
            <person name="Rouy Z."/>
            <person name="Barbe V."/>
            <person name="Acosta C."/>
            <person name="Cattolico L."/>
            <person name="Jubin C."/>
            <person name="Lajus A."/>
            <person name="Segurens B."/>
            <person name="Vacherie B."/>
            <person name="Wincker P."/>
            <person name="Weissenbach J."/>
            <person name="Lemaitre B."/>
            <person name="Medigue C."/>
            <person name="Boccard F."/>
        </authorList>
    </citation>
    <scope>NUCLEOTIDE SEQUENCE [LARGE SCALE GENOMIC DNA]</scope>
    <source>
        <strain>L48</strain>
    </source>
</reference>
<organism>
    <name type="scientific">Pseudomonas entomophila (strain L48)</name>
    <dbReference type="NCBI Taxonomy" id="384676"/>
    <lineage>
        <taxon>Bacteria</taxon>
        <taxon>Pseudomonadati</taxon>
        <taxon>Pseudomonadota</taxon>
        <taxon>Gammaproteobacteria</taxon>
        <taxon>Pseudomonadales</taxon>
        <taxon>Pseudomonadaceae</taxon>
        <taxon>Pseudomonas</taxon>
    </lineage>
</organism>
<accession>Q1ID18</accession>
<sequence>MMRILLFVATNLAVVLVASITLSLFGFNGFMAANGVDLNLGQLLVFCAVFGFAGSLVSLFISKWMAKMTTGTQIITQPRTRHEQWLLQTVEELSREAGIKMPEVGIFPAYEANAFATGWNRNDALVAVSQGLLERFSPDEVRAVLAHEIGHVANGDMVTMALVQGVVNTFVMFFARIIGNFVDRVIFKNEEGHGIAYFVATIVAELVLGILASIIVMWYSRRREFRADEAGAHLAGTGAMIGALQRLRSEQGLPVHMPDTMKAFGINGGLKHGLAGLLMSHPPLEDRIDALRRRG</sequence>
<name>HTPX_PSEE4</name>
<feature type="chain" id="PRO_1000020914" description="Protease HtpX">
    <location>
        <begin position="1"/>
        <end position="295"/>
    </location>
</feature>
<feature type="transmembrane region" description="Helical" evidence="1">
    <location>
        <begin position="4"/>
        <end position="24"/>
    </location>
</feature>
<feature type="transmembrane region" description="Helical" evidence="1">
    <location>
        <begin position="41"/>
        <end position="61"/>
    </location>
</feature>
<feature type="transmembrane region" description="Helical" evidence="1">
    <location>
        <begin position="158"/>
        <end position="178"/>
    </location>
</feature>
<feature type="transmembrane region" description="Helical" evidence="1">
    <location>
        <begin position="198"/>
        <end position="218"/>
    </location>
</feature>
<feature type="active site" evidence="1">
    <location>
        <position position="148"/>
    </location>
</feature>
<feature type="binding site" evidence="1">
    <location>
        <position position="147"/>
    </location>
    <ligand>
        <name>Zn(2+)</name>
        <dbReference type="ChEBI" id="CHEBI:29105"/>
        <note>catalytic</note>
    </ligand>
</feature>
<feature type="binding site" evidence="1">
    <location>
        <position position="151"/>
    </location>
    <ligand>
        <name>Zn(2+)</name>
        <dbReference type="ChEBI" id="CHEBI:29105"/>
        <note>catalytic</note>
    </ligand>
</feature>
<feature type="binding site" evidence="1">
    <location>
        <position position="224"/>
    </location>
    <ligand>
        <name>Zn(2+)</name>
        <dbReference type="ChEBI" id="CHEBI:29105"/>
        <note>catalytic</note>
    </ligand>
</feature>
<protein>
    <recommendedName>
        <fullName evidence="1">Protease HtpX</fullName>
        <ecNumber evidence="1">3.4.24.-</ecNumber>
    </recommendedName>
    <alternativeName>
        <fullName evidence="1">Heat shock protein HtpX</fullName>
    </alternativeName>
</protein>
<evidence type="ECO:0000255" key="1">
    <source>
        <dbReference type="HAMAP-Rule" id="MF_00188"/>
    </source>
</evidence>